<protein>
    <recommendedName>
        <fullName>Aspartic proteinase yapsin-3</fullName>
        <ecNumber>3.4.23.-</ecNumber>
    </recommendedName>
</protein>
<dbReference type="EC" id="3.4.23.-"/>
<dbReference type="EMBL" id="X89514">
    <property type="protein sequence ID" value="CAA61700.1"/>
    <property type="molecule type" value="Genomic_DNA"/>
</dbReference>
<dbReference type="EMBL" id="Z73293">
    <property type="protein sequence ID" value="CAA97689.1"/>
    <property type="molecule type" value="Genomic_DNA"/>
</dbReference>
<dbReference type="EMBL" id="U53877">
    <property type="protein sequence ID" value="AAB82368.1"/>
    <property type="molecule type" value="Genomic_DNA"/>
</dbReference>
<dbReference type="EMBL" id="BK006945">
    <property type="protein sequence ID" value="DAA09435.1"/>
    <property type="molecule type" value="Genomic_DNA"/>
</dbReference>
<dbReference type="PIR" id="S64958">
    <property type="entry name" value="S64958"/>
</dbReference>
<dbReference type="RefSeq" id="NP_013222.1">
    <property type="nucleotide sequence ID" value="NM_001182008.1"/>
</dbReference>
<dbReference type="SMR" id="Q12303"/>
<dbReference type="BioGRID" id="31393">
    <property type="interactions" value="38"/>
</dbReference>
<dbReference type="DIP" id="DIP-4569N"/>
<dbReference type="FunCoup" id="Q12303">
    <property type="interactions" value="130"/>
</dbReference>
<dbReference type="IntAct" id="Q12303">
    <property type="interactions" value="1"/>
</dbReference>
<dbReference type="MINT" id="Q12303"/>
<dbReference type="STRING" id="4932.YLR121C"/>
<dbReference type="MEROPS" id="A01.035"/>
<dbReference type="GlyCosmos" id="Q12303">
    <property type="glycosylation" value="11 sites, No reported glycans"/>
</dbReference>
<dbReference type="GlyGen" id="Q12303">
    <property type="glycosylation" value="11 sites"/>
</dbReference>
<dbReference type="PaxDb" id="4932-YLR121C"/>
<dbReference type="PeptideAtlas" id="Q12303"/>
<dbReference type="EnsemblFungi" id="YLR121C_mRNA">
    <property type="protein sequence ID" value="YLR121C"/>
    <property type="gene ID" value="YLR121C"/>
</dbReference>
<dbReference type="GeneID" id="850812"/>
<dbReference type="KEGG" id="sce:YLR121C"/>
<dbReference type="AGR" id="SGD:S000004111"/>
<dbReference type="SGD" id="S000004111">
    <property type="gene designation" value="YPS3"/>
</dbReference>
<dbReference type="VEuPathDB" id="FungiDB:YLR121C"/>
<dbReference type="eggNOG" id="KOG1339">
    <property type="taxonomic scope" value="Eukaryota"/>
</dbReference>
<dbReference type="GeneTree" id="ENSGT00940000166661"/>
<dbReference type="HOGENOM" id="CLU_013253_9_1_1"/>
<dbReference type="InParanoid" id="Q12303"/>
<dbReference type="OMA" id="DLPTSKC"/>
<dbReference type="OrthoDB" id="771136at2759"/>
<dbReference type="BioCyc" id="YEAST:G3O-32266-MONOMER"/>
<dbReference type="BioGRID-ORCS" id="850812">
    <property type="hits" value="2 hits in 10 CRISPR screens"/>
</dbReference>
<dbReference type="PRO" id="PR:Q12303"/>
<dbReference type="Proteomes" id="UP000002311">
    <property type="component" value="Chromosome XII"/>
</dbReference>
<dbReference type="RNAct" id="Q12303">
    <property type="molecule type" value="protein"/>
</dbReference>
<dbReference type="GO" id="GO:0005576">
    <property type="term" value="C:extracellular region"/>
    <property type="evidence" value="ECO:0000318"/>
    <property type="project" value="GO_Central"/>
</dbReference>
<dbReference type="GO" id="GO:0009277">
    <property type="term" value="C:fungal-type cell wall"/>
    <property type="evidence" value="ECO:0000318"/>
    <property type="project" value="GO_Central"/>
</dbReference>
<dbReference type="GO" id="GO:0005886">
    <property type="term" value="C:plasma membrane"/>
    <property type="evidence" value="ECO:0000314"/>
    <property type="project" value="SGD"/>
</dbReference>
<dbReference type="GO" id="GO:0098552">
    <property type="term" value="C:side of membrane"/>
    <property type="evidence" value="ECO:0007669"/>
    <property type="project" value="UniProtKB-KW"/>
</dbReference>
<dbReference type="GO" id="GO:0004190">
    <property type="term" value="F:aspartic-type endopeptidase activity"/>
    <property type="evidence" value="ECO:0000314"/>
    <property type="project" value="SGD"/>
</dbReference>
<dbReference type="GO" id="GO:0031505">
    <property type="term" value="P:fungal-type cell wall organization"/>
    <property type="evidence" value="ECO:0000316"/>
    <property type="project" value="SGD"/>
</dbReference>
<dbReference type="GO" id="GO:0006508">
    <property type="term" value="P:proteolysis"/>
    <property type="evidence" value="ECO:0007669"/>
    <property type="project" value="UniProtKB-KW"/>
</dbReference>
<dbReference type="CDD" id="cd05474">
    <property type="entry name" value="SAP_like"/>
    <property type="match status" value="1"/>
</dbReference>
<dbReference type="FunFam" id="2.40.70.10:FF:000011">
    <property type="entry name" value="Aspartic protease"/>
    <property type="match status" value="1"/>
</dbReference>
<dbReference type="FunFam" id="2.40.70.10:FF:000023">
    <property type="entry name" value="Aspartic protease"/>
    <property type="match status" value="1"/>
</dbReference>
<dbReference type="Gene3D" id="2.40.70.10">
    <property type="entry name" value="Acid Proteases"/>
    <property type="match status" value="2"/>
</dbReference>
<dbReference type="InterPro" id="IPR001461">
    <property type="entry name" value="Aspartic_peptidase_A1"/>
</dbReference>
<dbReference type="InterPro" id="IPR001969">
    <property type="entry name" value="Aspartic_peptidase_AS"/>
</dbReference>
<dbReference type="InterPro" id="IPR033121">
    <property type="entry name" value="PEPTIDASE_A1"/>
</dbReference>
<dbReference type="InterPro" id="IPR021109">
    <property type="entry name" value="Peptidase_aspartic_dom_sf"/>
</dbReference>
<dbReference type="InterPro" id="IPR033876">
    <property type="entry name" value="SAP-like"/>
</dbReference>
<dbReference type="PANTHER" id="PTHR47966:SF65">
    <property type="entry name" value="ASPARTIC-TYPE ENDOPEPTIDASE"/>
    <property type="match status" value="1"/>
</dbReference>
<dbReference type="PANTHER" id="PTHR47966">
    <property type="entry name" value="BETA-SITE APP-CLEAVING ENZYME, ISOFORM A-RELATED"/>
    <property type="match status" value="1"/>
</dbReference>
<dbReference type="Pfam" id="PF00026">
    <property type="entry name" value="Asp"/>
    <property type="match status" value="1"/>
</dbReference>
<dbReference type="PRINTS" id="PR00792">
    <property type="entry name" value="PEPSIN"/>
</dbReference>
<dbReference type="SUPFAM" id="SSF50630">
    <property type="entry name" value="Acid proteases"/>
    <property type="match status" value="1"/>
</dbReference>
<dbReference type="PROSITE" id="PS00141">
    <property type="entry name" value="ASP_PROTEASE"/>
    <property type="match status" value="2"/>
</dbReference>
<dbReference type="PROSITE" id="PS51767">
    <property type="entry name" value="PEPTIDASE_A1"/>
    <property type="match status" value="1"/>
</dbReference>
<accession>Q12303</accession>
<accession>D6VYB9</accession>
<evidence type="ECO:0000255" key="1"/>
<evidence type="ECO:0000255" key="2">
    <source>
        <dbReference type="PROSITE-ProRule" id="PRU01103"/>
    </source>
</evidence>
<evidence type="ECO:0000255" key="3">
    <source>
        <dbReference type="PROSITE-ProRule" id="PRU10094"/>
    </source>
</evidence>
<evidence type="ECO:0000256" key="4">
    <source>
        <dbReference type="SAM" id="MobiDB-lite"/>
    </source>
</evidence>
<evidence type="ECO:0000269" key="5">
    <source>
    </source>
</evidence>
<evidence type="ECO:0000269" key="6">
    <source>
    </source>
</evidence>
<evidence type="ECO:0000269" key="7">
    <source>
    </source>
</evidence>
<evidence type="ECO:0000305" key="8"/>
<proteinExistence type="evidence at protein level"/>
<comment type="function">
    <text evidence="5 7">Cleaves proteins C-terminally to mono- and paired-basic residues. Required for cell wall integrity.</text>
</comment>
<comment type="subcellular location">
    <subcellularLocation>
        <location evidence="5 6">Cell membrane</location>
        <topology evidence="5 6">Lipid-anchor</topology>
        <topology evidence="5 6">GPI-anchor</topology>
    </subcellularLocation>
    <text>GPI-anchored plasma membrane protein (GPI-PMP).</text>
</comment>
<comment type="induction">
    <text evidence="6">Positively regulated in response to cell wall perturbation.</text>
</comment>
<comment type="PTM">
    <text evidence="5">Can also be processed to start at Phe-54.</text>
</comment>
<comment type="similarity">
    <text evidence="8">Belongs to the peptidase A1 family.</text>
</comment>
<keyword id="KW-0064">Aspartyl protease</keyword>
<keyword id="KW-1003">Cell membrane</keyword>
<keyword id="KW-0165">Cleavage on pair of basic residues</keyword>
<keyword id="KW-0903">Direct protein sequencing</keyword>
<keyword id="KW-0325">Glycoprotein</keyword>
<keyword id="KW-0336">GPI-anchor</keyword>
<keyword id="KW-0378">Hydrolase</keyword>
<keyword id="KW-0449">Lipoprotein</keyword>
<keyword id="KW-0472">Membrane</keyword>
<keyword id="KW-0645">Protease</keyword>
<keyword id="KW-1185">Reference proteome</keyword>
<keyword id="KW-0732">Signal</keyword>
<keyword id="KW-0865">Zymogen</keyword>
<gene>
    <name type="primary">YPS3</name>
    <name type="ordered locus">YLR121C</name>
    <name type="ORF">L2964</name>
    <name type="ORF">L9233.10</name>
</gene>
<reference key="1">
    <citation type="journal article" date="1997" name="Yeast">
        <title>Sequence analysis of a 37.6 kbp cosmid clone from the right arm of Saccharomyces cerevisiae chromosome XII, carrying YAP3, HOG1, SNR6, tRNA-Arg3 and 23 new open reading frames, among which several homologies to proteins involved in cell division control and to mammalian growth factors and other animal proteins are found.</title>
        <authorList>
            <person name="Verhasselt P."/>
            <person name="Volckaert G."/>
        </authorList>
    </citation>
    <scope>NUCLEOTIDE SEQUENCE [GENOMIC DNA]</scope>
    <source>
        <strain>ATCC 90840 / EAY235 / FY23</strain>
    </source>
</reference>
<reference key="2">
    <citation type="journal article" date="1997" name="Nature">
        <title>The nucleotide sequence of Saccharomyces cerevisiae chromosome XII.</title>
        <authorList>
            <person name="Johnston M."/>
            <person name="Hillier L.W."/>
            <person name="Riles L."/>
            <person name="Albermann K."/>
            <person name="Andre B."/>
            <person name="Ansorge W."/>
            <person name="Benes V."/>
            <person name="Brueckner M."/>
            <person name="Delius H."/>
            <person name="Dubois E."/>
            <person name="Duesterhoeft A."/>
            <person name="Entian K.-D."/>
            <person name="Floeth M."/>
            <person name="Goffeau A."/>
            <person name="Hebling U."/>
            <person name="Heumann K."/>
            <person name="Heuss-Neitzel D."/>
            <person name="Hilbert H."/>
            <person name="Hilger F."/>
            <person name="Kleine K."/>
            <person name="Koetter P."/>
            <person name="Louis E.J."/>
            <person name="Messenguy F."/>
            <person name="Mewes H.-W."/>
            <person name="Miosga T."/>
            <person name="Moestl D."/>
            <person name="Mueller-Auer S."/>
            <person name="Nentwich U."/>
            <person name="Obermaier B."/>
            <person name="Piravandi E."/>
            <person name="Pohl T.M."/>
            <person name="Portetelle D."/>
            <person name="Purnelle B."/>
            <person name="Rechmann S."/>
            <person name="Rieger M."/>
            <person name="Rinke M."/>
            <person name="Rose M."/>
            <person name="Scharfe M."/>
            <person name="Scherens B."/>
            <person name="Scholler P."/>
            <person name="Schwager C."/>
            <person name="Schwarz S."/>
            <person name="Underwood A.P."/>
            <person name="Urrestarazu L.A."/>
            <person name="Vandenbol M."/>
            <person name="Verhasselt P."/>
            <person name="Vierendeels F."/>
            <person name="Voet M."/>
            <person name="Volckaert G."/>
            <person name="Voss H."/>
            <person name="Wambutt R."/>
            <person name="Wedler E."/>
            <person name="Wedler H."/>
            <person name="Zimmermann F.K."/>
            <person name="Zollner A."/>
            <person name="Hani J."/>
            <person name="Hoheisel J.D."/>
        </authorList>
    </citation>
    <scope>NUCLEOTIDE SEQUENCE [LARGE SCALE GENOMIC DNA]</scope>
    <source>
        <strain>ATCC 204508 / S288c</strain>
    </source>
</reference>
<reference key="3">
    <citation type="journal article" date="2014" name="G3 (Bethesda)">
        <title>The reference genome sequence of Saccharomyces cerevisiae: Then and now.</title>
        <authorList>
            <person name="Engel S.R."/>
            <person name="Dietrich F.S."/>
            <person name="Fisk D.G."/>
            <person name="Binkley G."/>
            <person name="Balakrishnan R."/>
            <person name="Costanzo M.C."/>
            <person name="Dwight S.S."/>
            <person name="Hitz B.C."/>
            <person name="Karra K."/>
            <person name="Nash R.S."/>
            <person name="Weng S."/>
            <person name="Wong E.D."/>
            <person name="Lloyd P."/>
            <person name="Skrzypek M.S."/>
            <person name="Miyasato S.R."/>
            <person name="Simison M."/>
            <person name="Cherry J.M."/>
        </authorList>
    </citation>
    <scope>GENOME REANNOTATION</scope>
    <source>
        <strain>ATCC 204508 / S288c</strain>
    </source>
</reference>
<reference key="4">
    <citation type="journal article" date="1999" name="Biochem. J.">
        <title>Identification and characterization of Saccharomyces cerevisiae yapsin 3, a new member of the yapsin family of aspartic proteases encoded by the YPS3 gene.</title>
        <authorList>
            <person name="Olsen V."/>
            <person name="Cawley N.X."/>
            <person name="Brandt J."/>
            <person name="Egel-Mitani M."/>
            <person name="Loh Y.P."/>
        </authorList>
    </citation>
    <scope>PROTEIN SEQUENCE OF 48-68</scope>
    <scope>FUNCTION</scope>
    <scope>SUBCELLULAR LOCATION</scope>
    <scope>PROTEOLYTIC PROCESSING</scope>
</reference>
<reference key="5">
    <citation type="journal article" date="2000" name="Mol. Gen. Genet.">
        <title>Up-regulation of genes encoding glycosylphosphatidylinositol (GPI)-attached proteins in response to cell wall damage caused by disruption of FKS1 in Saccharomyces cerevisiae.</title>
        <authorList>
            <person name="Terashima H."/>
            <person name="Yabuki N."/>
            <person name="Arisawa M."/>
            <person name="Hamada K."/>
            <person name="Kitada K."/>
        </authorList>
    </citation>
    <scope>INDUCTION</scope>
    <scope>SUBCELLULAR LOCATION</scope>
</reference>
<reference key="6">
    <citation type="journal article" date="2005" name="Eukaryot. Cell">
        <title>Yapsins are a family of aspartyl proteases required for cell wall integrity in Saccharomyces cerevisiae.</title>
        <authorList>
            <person name="Krysan D.J."/>
            <person name="Ting E.L."/>
            <person name="Abeijon C."/>
            <person name="Kroos L."/>
            <person name="Fuller R.S."/>
        </authorList>
    </citation>
    <scope>FUNCTION</scope>
</reference>
<feature type="signal peptide" evidence="1">
    <location>
        <begin position="1"/>
        <end position="20"/>
    </location>
</feature>
<feature type="propeptide" id="PRO_0000025841" evidence="5">
    <location>
        <begin position="21"/>
        <end position="47"/>
    </location>
</feature>
<feature type="chain" id="PRO_0000025842" description="Aspartic proteinase yapsin-3">
    <location>
        <begin position="48"/>
        <end position="483"/>
    </location>
</feature>
<feature type="propeptide" id="PRO_0000025843" description="Removed in mature form" evidence="1">
    <location>
        <begin position="484"/>
        <end position="508"/>
    </location>
</feature>
<feature type="domain" description="Peptidase A1" evidence="2">
    <location>
        <begin position="63"/>
        <end position="394"/>
    </location>
</feature>
<feature type="region of interest" description="Disordered" evidence="4">
    <location>
        <begin position="448"/>
        <end position="476"/>
    </location>
</feature>
<feature type="compositionally biased region" description="Low complexity" evidence="4">
    <location>
        <begin position="448"/>
        <end position="468"/>
    </location>
</feature>
<feature type="active site" evidence="3">
    <location>
        <position position="81"/>
    </location>
</feature>
<feature type="active site" evidence="3">
    <location>
        <position position="288"/>
    </location>
</feature>
<feature type="lipid moiety-binding region" description="GPI-anchor amidated asparagine" evidence="1">
    <location>
        <position position="483"/>
    </location>
</feature>
<feature type="glycosylation site" description="N-linked (GlcNAc...) asparagine" evidence="1">
    <location>
        <position position="75"/>
    </location>
</feature>
<feature type="glycosylation site" description="N-linked (GlcNAc...) asparagine" evidence="1">
    <location>
        <position position="120"/>
    </location>
</feature>
<feature type="glycosylation site" description="N-linked (GlcNAc...) asparagine" evidence="1">
    <location>
        <position position="160"/>
    </location>
</feature>
<feature type="glycosylation site" description="N-linked (GlcNAc...) asparagine" evidence="1">
    <location>
        <position position="163"/>
    </location>
</feature>
<feature type="glycosylation site" description="N-linked (GlcNAc...) asparagine" evidence="1">
    <location>
        <position position="275"/>
    </location>
</feature>
<feature type="glycosylation site" description="N-linked (GlcNAc...) asparagine" evidence="1">
    <location>
        <position position="309"/>
    </location>
</feature>
<feature type="glycosylation site" description="N-linked (GlcNAc...) asparagine" evidence="1">
    <location>
        <position position="328"/>
    </location>
</feature>
<feature type="glycosylation site" description="N-linked (GlcNAc...) asparagine" evidence="1">
    <location>
        <position position="367"/>
    </location>
</feature>
<feature type="glycosylation site" description="N-linked (GlcNAc...) asparagine" evidence="1">
    <location>
        <position position="422"/>
    </location>
</feature>
<feature type="glycosylation site" description="N-linked (GlcNAc...) asparagine" evidence="1">
    <location>
        <position position="445"/>
    </location>
</feature>
<feature type="glycosylation site" description="N-linked (GlcNAc...) asparagine" evidence="1">
    <location>
        <position position="462"/>
    </location>
</feature>
<organism>
    <name type="scientific">Saccharomyces cerevisiae (strain ATCC 204508 / S288c)</name>
    <name type="common">Baker's yeast</name>
    <dbReference type="NCBI Taxonomy" id="559292"/>
    <lineage>
        <taxon>Eukaryota</taxon>
        <taxon>Fungi</taxon>
        <taxon>Dikarya</taxon>
        <taxon>Ascomycota</taxon>
        <taxon>Saccharomycotina</taxon>
        <taxon>Saccharomycetes</taxon>
        <taxon>Saccharomycetales</taxon>
        <taxon>Saccharomycetaceae</taxon>
        <taxon>Saccharomyces</taxon>
    </lineage>
</organism>
<name>YPS3_YEAST</name>
<sequence length="508" mass="54570">MKLQLAAVATLAVLTSPAFGRVLPDGKYVKIPFTKKKNGDNGELSKRSNGHEKFVLANEQSFYSVELAIGTPSQNLTVLLDTGSADLWVPGKGNPYCGSVMDCDQYGVFDKTKSSTFKANKSSPFYAAYGDGTYAEGAFGQDKLKYNELDLSGLSFAVANESNSTFGVLGIGLSTLEVTYSGKVAIMDKRSYEYDNFPLFLKHSGAIDATAYSLFLNDESQSSGSILFGAVDHSKYEGQLYTIPLVNLYKSQGYQHPVAFDVTLQGLGLQTDKRNITLTTTKLPALLDSGTTLTYLPSQAVALLAKSLNASYSKTLGYYEYTCPSSDNKTSVAFDFGGFRINAPLSDFTMQTSVGTCVLAIIPQAGNATAILGDSFLRNAYVVYDLDNYEISLAQAKYGTGKENVEVIKSTVPSAIRAPSYNNTWSNYASATSGGNIFTTVRTFNGTSTATTTRSTTTKKTNSTTTAKSTHKSKRALQRAATNSASSIRSTLGLLLVPSLLILSVFFS</sequence>